<sequence length="143" mass="14770">MLVLRNLLALVTLALLFTLSSAQYTLSVSNSASGSKCTTAVSAKLNACNTGCLNSFNIVESSNGKGLVFKTFINAACSGEYESLSQFTCAANQKIPTTSYIVSCNSTPSSNSTTDSDSSSGSTVMIGLASSLLFAFATLLALF</sequence>
<dbReference type="EMBL" id="Z36528">
    <property type="protein sequence ID" value="CAA85296.1"/>
    <property type="molecule type" value="mRNA"/>
</dbReference>
<dbReference type="EMBL" id="Z36534">
    <property type="protein sequence ID" value="CAA85300.1"/>
    <property type="molecule type" value="Genomic_DNA"/>
</dbReference>
<dbReference type="EMBL" id="Z36535">
    <property type="protein sequence ID" value="CAA85301.1"/>
    <property type="molecule type" value="mRNA"/>
</dbReference>
<dbReference type="EMBL" id="AAFI02000218">
    <property type="protein sequence ID" value="EAL60573.1"/>
    <property type="molecule type" value="Genomic_DNA"/>
</dbReference>
<dbReference type="PIR" id="A54793">
    <property type="entry name" value="A54793"/>
</dbReference>
<dbReference type="RefSeq" id="XP_629065.1">
    <property type="nucleotide sequence ID" value="XM_629063.1"/>
</dbReference>
<dbReference type="FunCoup" id="P54660">
    <property type="interactions" value="700"/>
</dbReference>
<dbReference type="STRING" id="44689.P54660"/>
<dbReference type="GlyCosmos" id="P54660">
    <property type="glycosylation" value="1 site, No reported glycans"/>
</dbReference>
<dbReference type="GlyGen" id="P54660">
    <property type="glycosylation" value="2 sites"/>
</dbReference>
<dbReference type="PaxDb" id="44689-DDB0215380"/>
<dbReference type="EnsemblProtists" id="EAL60573">
    <property type="protein sequence ID" value="EAL60573"/>
    <property type="gene ID" value="DDB_G0293522"/>
</dbReference>
<dbReference type="GeneID" id="8629357"/>
<dbReference type="KEGG" id="ddi:DDB_G0293522"/>
<dbReference type="dictyBase" id="DDB_G0293522">
    <property type="gene designation" value="ponA"/>
</dbReference>
<dbReference type="VEuPathDB" id="AmoebaDB:DDB_G0293522"/>
<dbReference type="HOGENOM" id="CLU_1809794_0_0_1"/>
<dbReference type="InParanoid" id="P54660"/>
<dbReference type="PRO" id="PR:P54660"/>
<dbReference type="Proteomes" id="UP000002195">
    <property type="component" value="Chromosome 6"/>
</dbReference>
<dbReference type="GO" id="GO:0005911">
    <property type="term" value="C:cell-cell junction"/>
    <property type="evidence" value="ECO:0000314"/>
    <property type="project" value="dictyBase"/>
</dbReference>
<dbReference type="GO" id="GO:0005798">
    <property type="term" value="C:Golgi-associated vesicle"/>
    <property type="evidence" value="ECO:0000314"/>
    <property type="project" value="dictyBase"/>
</dbReference>
<dbReference type="GO" id="GO:0005815">
    <property type="term" value="C:microtubule organizing center"/>
    <property type="evidence" value="ECO:0000314"/>
    <property type="project" value="dictyBase"/>
</dbReference>
<dbReference type="GO" id="GO:0005886">
    <property type="term" value="C:plasma membrane"/>
    <property type="evidence" value="ECO:0000314"/>
    <property type="project" value="dictyBase"/>
</dbReference>
<dbReference type="GO" id="GO:0098552">
    <property type="term" value="C:side of membrane"/>
    <property type="evidence" value="ECO:0007669"/>
    <property type="project" value="UniProtKB-KW"/>
</dbReference>
<dbReference type="GO" id="GO:0051015">
    <property type="term" value="F:actin filament binding"/>
    <property type="evidence" value="ECO:0000314"/>
    <property type="project" value="dictyBase"/>
</dbReference>
<dbReference type="GO" id="GO:0030246">
    <property type="term" value="F:carbohydrate binding"/>
    <property type="evidence" value="ECO:0000314"/>
    <property type="project" value="dictyBase"/>
</dbReference>
<dbReference type="GO" id="GO:0106006">
    <property type="term" value="F:cytoskeletal protein-membrane anchor activity"/>
    <property type="evidence" value="ECO:0000314"/>
    <property type="project" value="dictyBase"/>
</dbReference>
<dbReference type="GO" id="GO:0045010">
    <property type="term" value="P:actin nucleation"/>
    <property type="evidence" value="ECO:0000314"/>
    <property type="project" value="dictyBase"/>
</dbReference>
<dbReference type="GO" id="GO:0030587">
    <property type="term" value="P:sorocarp development"/>
    <property type="evidence" value="ECO:0000315"/>
    <property type="project" value="dictyBase"/>
</dbReference>
<proteinExistence type="evidence at protein level"/>
<name>PONA_DICDI</name>
<organism>
    <name type="scientific">Dictyostelium discoideum</name>
    <name type="common">Social amoeba</name>
    <dbReference type="NCBI Taxonomy" id="44689"/>
    <lineage>
        <taxon>Eukaryota</taxon>
        <taxon>Amoebozoa</taxon>
        <taxon>Evosea</taxon>
        <taxon>Eumycetozoa</taxon>
        <taxon>Dictyostelia</taxon>
        <taxon>Dictyosteliales</taxon>
        <taxon>Dictyosteliaceae</taxon>
        <taxon>Dictyostelium</taxon>
    </lineage>
</organism>
<accession>P54660</accession>
<accession>Q54BG4</accession>
<gene>
    <name type="primary">ponA</name>
    <name type="ORF">DDB_G0293522</name>
</gene>
<evidence type="ECO:0000255" key="1"/>
<evidence type="ECO:0000269" key="2">
    <source>
    </source>
</evidence>
<evidence type="ECO:0000269" key="3">
    <source>
    </source>
</evidence>
<evidence type="ECO:0000269" key="4">
    <source>
    </source>
</evidence>
<evidence type="ECO:0000305" key="5"/>
<reference key="1">
    <citation type="journal article" date="1994" name="J. Cell Biol.">
        <title>Ponticulin is an atypical membrane protein.</title>
        <authorList>
            <person name="Hitt A.L."/>
            <person name="Lu T.H."/>
            <person name="Luna E.J."/>
        </authorList>
    </citation>
    <scope>NUCLEOTIDE SEQUENCE [GENOMIC DNA / MRNA]</scope>
    <scope>PARTIAL PROTEIN SEQUENCE</scope>
    <source>
        <strain>AX3</strain>
    </source>
</reference>
<reference key="2">
    <citation type="journal article" date="2005" name="Nature">
        <title>The genome of the social amoeba Dictyostelium discoideum.</title>
        <authorList>
            <person name="Eichinger L."/>
            <person name="Pachebat J.A."/>
            <person name="Gloeckner G."/>
            <person name="Rajandream M.A."/>
            <person name="Sucgang R."/>
            <person name="Berriman M."/>
            <person name="Song J."/>
            <person name="Olsen R."/>
            <person name="Szafranski K."/>
            <person name="Xu Q."/>
            <person name="Tunggal B."/>
            <person name="Kummerfeld S."/>
            <person name="Madera M."/>
            <person name="Konfortov B.A."/>
            <person name="Rivero F."/>
            <person name="Bankier A.T."/>
            <person name="Lehmann R."/>
            <person name="Hamlin N."/>
            <person name="Davies R."/>
            <person name="Gaudet P."/>
            <person name="Fey P."/>
            <person name="Pilcher K."/>
            <person name="Chen G."/>
            <person name="Saunders D."/>
            <person name="Sodergren E.J."/>
            <person name="Davis P."/>
            <person name="Kerhornou A."/>
            <person name="Nie X."/>
            <person name="Hall N."/>
            <person name="Anjard C."/>
            <person name="Hemphill L."/>
            <person name="Bason N."/>
            <person name="Farbrother P."/>
            <person name="Desany B."/>
            <person name="Just E."/>
            <person name="Morio T."/>
            <person name="Rost R."/>
            <person name="Churcher C.M."/>
            <person name="Cooper J."/>
            <person name="Haydock S."/>
            <person name="van Driessche N."/>
            <person name="Cronin A."/>
            <person name="Goodhead I."/>
            <person name="Muzny D.M."/>
            <person name="Mourier T."/>
            <person name="Pain A."/>
            <person name="Lu M."/>
            <person name="Harper D."/>
            <person name="Lindsay R."/>
            <person name="Hauser H."/>
            <person name="James K.D."/>
            <person name="Quiles M."/>
            <person name="Madan Babu M."/>
            <person name="Saito T."/>
            <person name="Buchrieser C."/>
            <person name="Wardroper A."/>
            <person name="Felder M."/>
            <person name="Thangavelu M."/>
            <person name="Johnson D."/>
            <person name="Knights A."/>
            <person name="Loulseged H."/>
            <person name="Mungall K.L."/>
            <person name="Oliver K."/>
            <person name="Price C."/>
            <person name="Quail M.A."/>
            <person name="Urushihara H."/>
            <person name="Hernandez J."/>
            <person name="Rabbinowitsch E."/>
            <person name="Steffen D."/>
            <person name="Sanders M."/>
            <person name="Ma J."/>
            <person name="Kohara Y."/>
            <person name="Sharp S."/>
            <person name="Simmonds M.N."/>
            <person name="Spiegler S."/>
            <person name="Tivey A."/>
            <person name="Sugano S."/>
            <person name="White B."/>
            <person name="Walker D."/>
            <person name="Woodward J.R."/>
            <person name="Winckler T."/>
            <person name="Tanaka Y."/>
            <person name="Shaulsky G."/>
            <person name="Schleicher M."/>
            <person name="Weinstock G.M."/>
            <person name="Rosenthal A."/>
            <person name="Cox E.C."/>
            <person name="Chisholm R.L."/>
            <person name="Gibbs R.A."/>
            <person name="Loomis W.F."/>
            <person name="Platzer M."/>
            <person name="Kay R.R."/>
            <person name="Williams J.G."/>
            <person name="Dear P.H."/>
            <person name="Noegel A.A."/>
            <person name="Barrell B.G."/>
            <person name="Kuspa A."/>
        </authorList>
    </citation>
    <scope>NUCLEOTIDE SEQUENCE [LARGE SCALE GENOMIC DNA]</scope>
    <source>
        <strain>AX4</strain>
    </source>
</reference>
<reference key="3">
    <citation type="journal article" date="1991" name="Methods Enzymol.">
        <title>F-actin affinity chromatography of detergent-solubilized plasma membranes: purification and initial characterization of ponticulin from Dictyostelium discoideum.</title>
        <authorList>
            <person name="Wuestehube L.J."/>
            <person name="Speicher D.W."/>
            <person name="Shariff A."/>
            <person name="Luna E.J."/>
        </authorList>
    </citation>
    <scope>PROTEIN SEQUENCE OF 23-45</scope>
</reference>
<reference key="4">
    <citation type="journal article" date="1994" name="J. Cell Biol.">
        <title>Ponticulin is the major high affinity link between the plasma membrane and the cortical actin network in Dictyostelium.</title>
        <authorList>
            <person name="Hitt A.L."/>
            <person name="Hartwig J.H."/>
            <person name="Luna E.J."/>
        </authorList>
    </citation>
    <scope>CHARACTERIZATION</scope>
</reference>
<reference key="5">
    <citation type="journal article" date="2003" name="Biochim. Biophys. Acta">
        <title>Identification of a second member of the ponticulin gene family and its differential expression pattern.</title>
        <authorList>
            <person name="Hitt A.L."/>
            <person name="Iijima-Shimizu M."/>
            <person name="DuBay M.J."/>
            <person name="Antonette L.L."/>
            <person name="Urushihara H."/>
            <person name="Wilkerson C.G."/>
        </authorList>
    </citation>
    <scope>DISRUPTION PHENOTYPE</scope>
</reference>
<reference key="6">
    <citation type="journal article" date="2008" name="Langmuir">
        <title>Minimal F-actin cytoskeletal system for planar supported phospholipid bilayers.</title>
        <authorList>
            <person name="Barfoot R.J."/>
            <person name="Sheikh K.H."/>
            <person name="Johnson B.R."/>
            <person name="Colyer J."/>
            <person name="Miles R.E."/>
            <person name="Jeuken L.J."/>
            <person name="Bushby R.J."/>
            <person name="Evans S.D."/>
        </authorList>
    </citation>
    <scope>FUNCTION</scope>
</reference>
<comment type="function">
    <text evidence="3">Binds F-actin and nucleates actin assembly. Major high affinity link between the plasma membrane and the cortical actin network.</text>
</comment>
<comment type="subunit">
    <text>Monomer.</text>
</comment>
<comment type="subcellular location">
    <subcellularLocation>
        <location>Cell membrane</location>
        <topology>Multi-pass membrane protein</topology>
    </subcellularLocation>
    <subcellularLocation>
        <location>Cell membrane</location>
        <topology>Lipid-anchor</topology>
        <topology>GPI-anchor</topology>
    </subcellularLocation>
    <text>Preferentially localized in some actin-rich membrane structures. Must span the plasma membrane, probably via beta-strands.</text>
</comment>
<comment type="developmental stage">
    <text>High expression during growth and early development which drops precipitously during cell streaming at circa 8 hours of development.</text>
</comment>
<comment type="PTM">
    <text>Disulfide bond(s) stabilize the native, actin-binding conformation of ponticulin.</text>
</comment>
<comment type="PTM">
    <text evidence="5">The GPI-like-anchor contains a phosphoceramide group, rather than a phosphatidyl group.</text>
</comment>
<comment type="disruption phenotype">
    <text evidence="2">Membranes isolated from axenically grown null cells have no detectable F-actin binding activity.</text>
</comment>
<comment type="similarity">
    <text evidence="5">Belongs to the ponticulin family.</text>
</comment>
<comment type="caution">
    <text evidence="5">The Dictyosteliida are known to produce a glycosylsphingolipidinositol anchor (GPI-like-anchor). It has not been established whether Dictyosteliida make a glycosylphosphatidylinositol anchor (GPI-anchor) also, and whether their GPI-like-anchor modifications can be interconverted with GPI-anchor modifications in a resculpting process. It has not been established that the GPI-like-anchor modification in Dictyosteliida utilizes the same sequence motif.</text>
</comment>
<feature type="signal peptide" evidence="4">
    <location>
        <begin position="1"/>
        <end position="22"/>
    </location>
</feature>
<feature type="chain" id="PRO_0000022083" description="Ponticulin">
    <location>
        <begin position="23"/>
        <end position="118"/>
    </location>
</feature>
<feature type="propeptide" id="PRO_0000022084" description="Removed in mature form" evidence="1">
    <location>
        <begin position="119"/>
        <end position="143"/>
    </location>
</feature>
<feature type="lipid moiety-binding region" description="GPI-like-anchor amidated serine" evidence="1">
    <location>
        <position position="118"/>
    </location>
</feature>
<feature type="glycosylation site" description="N-linked (GlcNAc...) asparagine" evidence="1">
    <location>
        <position position="111"/>
    </location>
</feature>
<keyword id="KW-0009">Actin-binding</keyword>
<keyword id="KW-1003">Cell membrane</keyword>
<keyword id="KW-0903">Direct protein sequencing</keyword>
<keyword id="KW-1015">Disulfide bond</keyword>
<keyword id="KW-0325">Glycoprotein</keyword>
<keyword id="KW-0336">GPI-anchor</keyword>
<keyword id="KW-0449">Lipoprotein</keyword>
<keyword id="KW-0472">Membrane</keyword>
<keyword id="KW-1185">Reference proteome</keyword>
<keyword id="KW-0732">Signal</keyword>
<keyword id="KW-0812">Transmembrane</keyword>
<keyword id="KW-1134">Transmembrane beta strand</keyword>
<protein>
    <recommendedName>
        <fullName>Ponticulin</fullName>
    </recommendedName>
</protein>